<feature type="chain" id="PRO_1000087340" description="Peptide methionine sulfoxide reductase MsrB">
    <location>
        <begin position="1"/>
        <end position="137"/>
    </location>
</feature>
<feature type="domain" description="MsrB" evidence="2">
    <location>
        <begin position="7"/>
        <end position="129"/>
    </location>
</feature>
<feature type="active site" description="Nucleophile" evidence="2">
    <location>
        <position position="118"/>
    </location>
</feature>
<feature type="binding site" evidence="2">
    <location>
        <position position="46"/>
    </location>
    <ligand>
        <name>Zn(2+)</name>
        <dbReference type="ChEBI" id="CHEBI:29105"/>
    </ligand>
</feature>
<feature type="binding site" evidence="2">
    <location>
        <position position="49"/>
    </location>
    <ligand>
        <name>Zn(2+)</name>
        <dbReference type="ChEBI" id="CHEBI:29105"/>
    </ligand>
</feature>
<feature type="binding site" evidence="2">
    <location>
        <position position="95"/>
    </location>
    <ligand>
        <name>Zn(2+)</name>
        <dbReference type="ChEBI" id="CHEBI:29105"/>
    </ligand>
</feature>
<feature type="binding site" evidence="2">
    <location>
        <position position="98"/>
    </location>
    <ligand>
        <name>Zn(2+)</name>
        <dbReference type="ChEBI" id="CHEBI:29105"/>
    </ligand>
</feature>
<organism>
    <name type="scientific">Salmonella arizonae (strain ATCC BAA-731 / CDC346-86 / RSK2980)</name>
    <dbReference type="NCBI Taxonomy" id="41514"/>
    <lineage>
        <taxon>Bacteria</taxon>
        <taxon>Pseudomonadati</taxon>
        <taxon>Pseudomonadota</taxon>
        <taxon>Gammaproteobacteria</taxon>
        <taxon>Enterobacterales</taxon>
        <taxon>Enterobacteriaceae</taxon>
        <taxon>Salmonella</taxon>
    </lineage>
</organism>
<evidence type="ECO:0000255" key="1">
    <source>
        <dbReference type="HAMAP-Rule" id="MF_01400"/>
    </source>
</evidence>
<evidence type="ECO:0000255" key="2">
    <source>
        <dbReference type="PROSITE-ProRule" id="PRU01126"/>
    </source>
</evidence>
<dbReference type="EC" id="1.8.4.12" evidence="1"/>
<dbReference type="EMBL" id="CP000880">
    <property type="protein sequence ID" value="ABX21579.1"/>
    <property type="molecule type" value="Genomic_DNA"/>
</dbReference>
<dbReference type="SMR" id="A9MFH4"/>
<dbReference type="STRING" id="41514.SARI_01688"/>
<dbReference type="KEGG" id="ses:SARI_01688"/>
<dbReference type="HOGENOM" id="CLU_031040_8_5_6"/>
<dbReference type="Proteomes" id="UP000002084">
    <property type="component" value="Chromosome"/>
</dbReference>
<dbReference type="GO" id="GO:0005737">
    <property type="term" value="C:cytoplasm"/>
    <property type="evidence" value="ECO:0007669"/>
    <property type="project" value="TreeGrafter"/>
</dbReference>
<dbReference type="GO" id="GO:0033743">
    <property type="term" value="F:peptide-methionine (R)-S-oxide reductase activity"/>
    <property type="evidence" value="ECO:0007669"/>
    <property type="project" value="UniProtKB-UniRule"/>
</dbReference>
<dbReference type="GO" id="GO:0008270">
    <property type="term" value="F:zinc ion binding"/>
    <property type="evidence" value="ECO:0007669"/>
    <property type="project" value="UniProtKB-UniRule"/>
</dbReference>
<dbReference type="GO" id="GO:0030091">
    <property type="term" value="P:protein repair"/>
    <property type="evidence" value="ECO:0007669"/>
    <property type="project" value="InterPro"/>
</dbReference>
<dbReference type="GO" id="GO:0006979">
    <property type="term" value="P:response to oxidative stress"/>
    <property type="evidence" value="ECO:0007669"/>
    <property type="project" value="InterPro"/>
</dbReference>
<dbReference type="FunFam" id="2.170.150.20:FF:000001">
    <property type="entry name" value="Peptide methionine sulfoxide reductase MsrB"/>
    <property type="match status" value="1"/>
</dbReference>
<dbReference type="Gene3D" id="2.170.150.20">
    <property type="entry name" value="Peptide methionine sulfoxide reductase"/>
    <property type="match status" value="1"/>
</dbReference>
<dbReference type="HAMAP" id="MF_01400">
    <property type="entry name" value="MsrB"/>
    <property type="match status" value="1"/>
</dbReference>
<dbReference type="InterPro" id="IPR028427">
    <property type="entry name" value="Met_Sox_Rdtase_MsrB"/>
</dbReference>
<dbReference type="InterPro" id="IPR002579">
    <property type="entry name" value="Met_Sox_Rdtase_MsrB_dom"/>
</dbReference>
<dbReference type="InterPro" id="IPR011057">
    <property type="entry name" value="Mss4-like_sf"/>
</dbReference>
<dbReference type="NCBIfam" id="TIGR00357">
    <property type="entry name" value="peptide-methionine (R)-S-oxide reductase MsrB"/>
    <property type="match status" value="1"/>
</dbReference>
<dbReference type="PANTHER" id="PTHR10173">
    <property type="entry name" value="METHIONINE SULFOXIDE REDUCTASE"/>
    <property type="match status" value="1"/>
</dbReference>
<dbReference type="PANTHER" id="PTHR10173:SF52">
    <property type="entry name" value="METHIONINE-R-SULFOXIDE REDUCTASE B1"/>
    <property type="match status" value="1"/>
</dbReference>
<dbReference type="Pfam" id="PF01641">
    <property type="entry name" value="SelR"/>
    <property type="match status" value="1"/>
</dbReference>
<dbReference type="SUPFAM" id="SSF51316">
    <property type="entry name" value="Mss4-like"/>
    <property type="match status" value="1"/>
</dbReference>
<dbReference type="PROSITE" id="PS51790">
    <property type="entry name" value="MSRB"/>
    <property type="match status" value="1"/>
</dbReference>
<name>MSRB_SALAR</name>
<gene>
    <name evidence="1" type="primary">msrB</name>
    <name type="ordered locus">SARI_01688</name>
</gene>
<reference key="1">
    <citation type="submission" date="2007-11" db="EMBL/GenBank/DDBJ databases">
        <authorList>
            <consortium name="The Salmonella enterica serovar Arizonae Genome Sequencing Project"/>
            <person name="McClelland M."/>
            <person name="Sanderson E.K."/>
            <person name="Porwollik S."/>
            <person name="Spieth J."/>
            <person name="Clifton W.S."/>
            <person name="Fulton R."/>
            <person name="Chunyan W."/>
            <person name="Wollam A."/>
            <person name="Shah N."/>
            <person name="Pepin K."/>
            <person name="Bhonagiri V."/>
            <person name="Nash W."/>
            <person name="Johnson M."/>
            <person name="Thiruvilangam P."/>
            <person name="Wilson R."/>
        </authorList>
    </citation>
    <scope>NUCLEOTIDE SEQUENCE [LARGE SCALE GENOMIC DNA]</scope>
    <source>
        <strain>ATCC BAA-731 / CDC346-86 / RSK2980</strain>
    </source>
</reference>
<accession>A9MFH4</accession>
<sequence length="137" mass="15469">MANQLSAEELKKKLSEMQFYVTQNRGTEPPFTGRLLHNKRDGVYHCLVCEAPLFHSHTKYDSGCGWPSFYQPVSKEAIRYIDDFSHGMQRVEIRCGNCDAHLGHVFPDGPQPTGERYCVNSASLAFSDEKNGDQLKG</sequence>
<proteinExistence type="inferred from homology"/>
<protein>
    <recommendedName>
        <fullName evidence="1">Peptide methionine sulfoxide reductase MsrB</fullName>
        <ecNumber evidence="1">1.8.4.12</ecNumber>
    </recommendedName>
    <alternativeName>
        <fullName evidence="1">Peptide-methionine (R)-S-oxide reductase</fullName>
    </alternativeName>
</protein>
<keyword id="KW-0479">Metal-binding</keyword>
<keyword id="KW-0560">Oxidoreductase</keyword>
<keyword id="KW-1185">Reference proteome</keyword>
<keyword id="KW-0862">Zinc</keyword>
<comment type="catalytic activity">
    <reaction evidence="1">
        <text>L-methionyl-[protein] + [thioredoxin]-disulfide + H2O = L-methionyl-(R)-S-oxide-[protein] + [thioredoxin]-dithiol</text>
        <dbReference type="Rhea" id="RHEA:24164"/>
        <dbReference type="Rhea" id="RHEA-COMP:10698"/>
        <dbReference type="Rhea" id="RHEA-COMP:10700"/>
        <dbReference type="Rhea" id="RHEA-COMP:12313"/>
        <dbReference type="Rhea" id="RHEA-COMP:12314"/>
        <dbReference type="ChEBI" id="CHEBI:15377"/>
        <dbReference type="ChEBI" id="CHEBI:16044"/>
        <dbReference type="ChEBI" id="CHEBI:29950"/>
        <dbReference type="ChEBI" id="CHEBI:45764"/>
        <dbReference type="ChEBI" id="CHEBI:50058"/>
        <dbReference type="EC" id="1.8.4.12"/>
    </reaction>
</comment>
<comment type="cofactor">
    <cofactor evidence="1">
        <name>Zn(2+)</name>
        <dbReference type="ChEBI" id="CHEBI:29105"/>
    </cofactor>
    <text evidence="1">Binds 1 zinc ion per subunit. The zinc ion is important for the structural integrity of the protein.</text>
</comment>
<comment type="similarity">
    <text evidence="1">Belongs to the MsrB Met sulfoxide reductase family.</text>
</comment>